<protein>
    <recommendedName>
        <fullName evidence="1">Merozoite surface protein 1</fullName>
    </recommendedName>
    <alternativeName>
        <fullName evidence="7">Merozoite surface antigen</fullName>
    </alternativeName>
    <alternativeName>
        <fullName evidence="7">PMMSA</fullName>
    </alternativeName>
    <alternativeName>
        <fullName evidence="8">p190</fullName>
    </alternativeName>
    <component>
        <recommendedName>
            <fullName evidence="1">p83 subunit</fullName>
        </recommendedName>
    </component>
    <component>
        <recommendedName>
            <fullName evidence="1">p30 subunit</fullName>
        </recommendedName>
    </component>
    <component>
        <recommendedName>
            <fullName evidence="1">p38 subunit</fullName>
        </recommendedName>
    </component>
    <component>
        <recommendedName>
            <fullName evidence="1">p42 subunit</fullName>
        </recommendedName>
    </component>
    <component>
        <recommendedName>
            <fullName evidence="1">p33 subunit</fullName>
        </recommendedName>
    </component>
    <component>
        <recommendedName>
            <fullName evidence="1">p19 subunit</fullName>
        </recommendedName>
    </component>
</protein>
<name>MSP1_PLAFM</name>
<dbReference type="EMBL" id="X05624">
    <property type="protein sequence ID" value="CAA29112.2"/>
    <property type="molecule type" value="Genomic_DNA"/>
</dbReference>
<dbReference type="BMRB" id="P08569"/>
<dbReference type="SMR" id="P08569"/>
<dbReference type="GlyCosmos" id="P08569">
    <property type="glycosylation" value="13 sites, No reported glycans"/>
</dbReference>
<dbReference type="GO" id="GO:0005576">
    <property type="term" value="C:extracellular region"/>
    <property type="evidence" value="ECO:0007669"/>
    <property type="project" value="UniProtKB-SubCell"/>
</dbReference>
<dbReference type="GO" id="GO:0005886">
    <property type="term" value="C:plasma membrane"/>
    <property type="evidence" value="ECO:0007669"/>
    <property type="project" value="UniProtKB-SubCell"/>
</dbReference>
<dbReference type="GO" id="GO:0098552">
    <property type="term" value="C:side of membrane"/>
    <property type="evidence" value="ECO:0007669"/>
    <property type="project" value="UniProtKB-KW"/>
</dbReference>
<dbReference type="GO" id="GO:0005774">
    <property type="term" value="C:vacuolar membrane"/>
    <property type="evidence" value="ECO:0007669"/>
    <property type="project" value="UniProtKB-SubCell"/>
</dbReference>
<dbReference type="Gene3D" id="2.10.25.10">
    <property type="entry name" value="Laminin"/>
    <property type="match status" value="2"/>
</dbReference>
<dbReference type="InterPro" id="IPR010901">
    <property type="entry name" value="MSP1_C"/>
</dbReference>
<dbReference type="InterPro" id="IPR024730">
    <property type="entry name" value="MSP1_EGF_1"/>
</dbReference>
<dbReference type="Pfam" id="PF12946">
    <property type="entry name" value="EGF_MSP1_1"/>
    <property type="match status" value="1"/>
</dbReference>
<dbReference type="Pfam" id="PF07462">
    <property type="entry name" value="MSP1_C"/>
    <property type="match status" value="1"/>
</dbReference>
<dbReference type="SUPFAM" id="SSF57196">
    <property type="entry name" value="EGF/Laminin"/>
    <property type="match status" value="2"/>
</dbReference>
<gene>
    <name evidence="1" type="primary">MSP1</name>
</gene>
<keyword id="KW-1003">Cell membrane</keyword>
<keyword id="KW-1015">Disulfide bond</keyword>
<keyword id="KW-0245">EGF-like domain</keyword>
<keyword id="KW-0325">Glycoprotein</keyword>
<keyword id="KW-0336">GPI-anchor</keyword>
<keyword id="KW-0449">Lipoprotein</keyword>
<keyword id="KW-0461">Malaria</keyword>
<keyword id="KW-0472">Membrane</keyword>
<keyword id="KW-0477">Merozoite</keyword>
<keyword id="KW-0677">Repeat</keyword>
<keyword id="KW-0964">Secreted</keyword>
<keyword id="KW-0732">Signal</keyword>
<keyword id="KW-0926">Vacuole</keyword>
<evidence type="ECO:0000250" key="1">
    <source>
        <dbReference type="UniProtKB" id="Q8I0U8"/>
    </source>
</evidence>
<evidence type="ECO:0000255" key="2"/>
<evidence type="ECO:0000256" key="3">
    <source>
        <dbReference type="SAM" id="MobiDB-lite"/>
    </source>
</evidence>
<evidence type="ECO:0000269" key="4">
    <source>
    </source>
</evidence>
<evidence type="ECO:0000269" key="5">
    <source>
    </source>
</evidence>
<evidence type="ECO:0000269" key="6">
    <source>
    </source>
</evidence>
<evidence type="ECO:0000303" key="7">
    <source>
    </source>
</evidence>
<evidence type="ECO:0000303" key="8">
    <source>
    </source>
</evidence>
<accession>P08569</accession>
<comment type="function">
    <text evidence="1">During the asexual blood stage, involved in merozoite egress from host erythrocytes possibly via its interaction with the host cytoskeleton protein spectrin resulting in the destabilization of the host cytoskeleton and thus leading to erythrocyte cell membrane rupture. Involved in the binding to host erythrocytes and is required for host erythrocyte invasion.</text>
</comment>
<comment type="function">
    <molecule>p33 subunit</molecule>
    <text evidence="1">By binding to host proinflammatory cytokine S100P may interfere with host immune responses.</text>
</comment>
<comment type="function">
    <molecule>p19 subunit</molecule>
    <text evidence="1">Involved in merozoite invasion of host erythrocytes. May play a role in the biogenesis and/or function of the food vacuole during the intraerythrocytic development.</text>
</comment>
<comment type="subunit">
    <text evidence="1">Forms a complex composed of subunits p83, p30, p38, and p42 which remain non-covalently associated; the complex is formed at the merozoite surface prior to egress from host erythrocytes. Forms a complex composed of processed MSP1 subunits, MSP6 subunit p36 and MSP7; the complex is formed at the merozoite surface prior to egress from host erythrocytes. Within the complex, interacts (via subunit p38) with MSP6 subunit p36 and (via subunits p83, p30 and p38) with MSP7 (via subunit p22). Forms a complex composed of MSP1, MSP6, DBLMSP1 and DBLMSP2. Within the complex, interacts (via subunit p38) with DBLMSP1 and DBLMSP2. Forms a complex composed of MSP1, and rhoptry proteins RhopH3, RAP1 and CLAG9/RhopH3. Within the complex, interacts (via subunits p42 and p19) with RhopH3 (via C-terminus). Forms a complex composed of MSP1, MSP6, MSP7, MSP9 and MSP3; within the complex, MSP6 and MSP9 mediate the binding to the host erythrocyte. Interacts (via subunits p19 and p42) with MSP9; the interaction is direct; MSP1 subunits p19 or p42, and MSP9 form a co-ligand complex that interacts with host SLC4A1/Band 3 protein. May interact with PFD6. Interacts with host spectrin.</text>
</comment>
<comment type="subunit">
    <molecule>p83 subunit</molecule>
    <text evidence="1">Interacts with host glycophorin GYPA in a sialic acid-independent manner.</text>
</comment>
<comment type="subunit">
    <molecule>p33 subunit</molecule>
    <text evidence="1">Interacts with host proinflammatory cytokine S100P; the interaction blocks S100P inflammatory and chemotactic activities.</text>
</comment>
<comment type="subunit">
    <molecule>p42 subunit</molecule>
    <text evidence="1">Interacts with host SLC4A1/Band 3 (via 5ABC region) on the host erythrocyte surface in a sialic acid-independent manner.</text>
</comment>
<comment type="subcellular location">
    <subcellularLocation>
        <location evidence="1">Cell membrane</location>
        <topology evidence="2">Lipid-anchor</topology>
        <topology evidence="2">GPI-anchor</topology>
    </subcellularLocation>
    <subcellularLocation>
        <location evidence="1">Secreted</location>
    </subcellularLocation>
</comment>
<comment type="subcellular location">
    <molecule>p19 subunit</molecule>
    <subcellularLocation>
        <location evidence="1">Cell membrane</location>
        <topology evidence="2">Lipid-anchor</topology>
        <topology evidence="2">GPI-anchor</topology>
    </subcellularLocation>
    <subcellularLocation>
        <location evidence="1">Vacuole membrane</location>
        <topology evidence="2">Lipid-anchor</topology>
        <topology evidence="2">GPI-anchor</topology>
    </subcellularLocation>
    <text evidence="1">In free merozoites, localizes to the cell membrane (By similarity). Following merozoite invasion of host erythrocytes, p19 subunit is endocytosed into small food vacuoles in the ring stage and persists throughout the subsequent intra-erythrocytic stages at the surface of the food vacuole where it forms clusters (By similarity).</text>
</comment>
<comment type="PTM">
    <text evidence="1 4">The p190 precursor is cleaved by SUB1 prior to merozoite egress into 4 subunits p83, p30, p38, and p42 which remain non-covalently associated (PubMed:1474993). SUB1-mediated proteolytic cleavage occurs in an orderly manner; the first cleavage occurs at the p30/p38 site, followed by cleavage at the p83/p30 site, the last cleavage occurs at the p38/p42 site. The order of cleavage is essential for parasite viability. SUB1-mediated processing is essential for merozoite egress. In a second processing step during erythrocyte invasion, p42 is cleaved by SUB2 into p33 and p19; the latter remains attached to the merozoite surface via its GPI-anchor and is endocytosed during the subsequent ring stage (By similarity).</text>
</comment>
<comment type="polymorphism">
    <text evidence="5 6">The sequence varies across Plasmodium strains (PubMed:3004972, PubMed:3079521). There are two major dimorphic forms of MSP1, typified by those expressed by the 3D7 and Wellcome P.falciparum isolates (PubMed:3004972, PubMed:3079521).</text>
</comment>
<proteinExistence type="evidence at protein level"/>
<reference key="1">
    <citation type="journal article" date="1987" name="J. Mol. Biol.">
        <title>Allelic dimorphism in a surface antigen gene of the malaria parasite Plasmodium falciparum.</title>
        <authorList>
            <person name="Tanabe K."/>
            <person name="Mackay M."/>
            <person name="Goman M."/>
            <person name="Scaife J.G."/>
        </authorList>
    </citation>
    <scope>NUCLEOTIDE SEQUENCE [GENOMIC DNA]</scope>
    <scope>POLYMORPHISM</scope>
</reference>
<reference key="2">
    <citation type="submission" date="2003-11" db="EMBL/GenBank/DDBJ databases">
        <authorList>
            <person name="Tanabe K."/>
        </authorList>
    </citation>
    <scope>SEQUENCE REVISION TO 821; 1220; 1403; 1569 AND 1629</scope>
</reference>
<reference key="3">
    <citation type="journal article" date="1985" name="EMBO J.">
        <title>Polymorphism of the precursor for the major surface antigens of Plasmodium falciparum merozoites: studies at the genetic level.</title>
        <authorList>
            <person name="Mackay M."/>
            <person name="Goman M."/>
            <person name="Bone N."/>
            <person name="Hyde J.E."/>
            <person name="Scaife J."/>
            <person name="Certa U."/>
            <person name="Stunnenberg H."/>
            <person name="Bujard H."/>
        </authorList>
    </citation>
    <scope>NUCLEOTIDE SEQUENCE [GENOMIC DNA] OF 1-115</scope>
    <scope>POLYMORPHISM</scope>
</reference>
<reference key="4">
    <citation type="journal article" date="1992" name="Mol. Biochem. Parasitol.">
        <title>Membrane-associated proteases process Plasmodium falciparum merozoite surface antigen-1 (MSA1) to fragment gp41.</title>
        <authorList>
            <person name="Cooper J.A."/>
            <person name="Bujard H."/>
        </authorList>
    </citation>
    <scope>PROTEOLYTIC CLEAVAGE</scope>
</reference>
<sequence>MKIIFFLCSFLFFIINTQCVTHESYQELVKKLEALEDAVLTGYSLFQKEKMVLNEGTSGTAVTTSTPGSSGSVTSGGSVASVASVASGGSGGSVASGGSGNSRRTNPSDNSSDSNTKTYADLKHRVQNYLFTIKELKYPELFDLTNHMLTLSKNVDGFKYLIDGYEEINELLYKLNFYYDLLRAKLNDACANSYCQIPFNLKIRANELDVLKKIVFGYRKPLDNIKDNVGKMEDYIKKNKTTIANINELIEGSKKTIDQNKNADNEEGKKKLYQAQYNLFIYNKQLQEAHNLISVLEKRIDTLKKNENIKKLLEDIDKIKTDAENPTTGSKPNPLPENKKKEVEGHEEKIKEIAKTIKFNIDSLFTDPLELEYYLREKNKKVDVTPKSQDPTKSVQIPKVPYPNGIVYPLPLTDIHNSLAADNDKNSYGDLMNPDTKEKINEKIITDNKERKIFINNIKKQIDLEEKNINHTKEQNKKLLEDYEKSKKDYEELLEKFYEMKFNNNFDKDVVDKIFSARYTYNVEKQRYNNKFSSSNNSVYNVQKLKKALSYLEDYSLRKGISEKDFNHYYTLKTGLEADIKKLTEEIKSSENKILEKNFKGLTHSANASLEVSDIVKLQVQKVLLIKKIEDLRKIELFLKNAQLKDSIHVPNIYKPQNKPEPYYLIVLKKEVDKLKEFIPKVKDMLKKEQAVLSSITQPLVAASETTEDGGHSTHTLSQSGETEVTEETEVTEETVGHTTTVTITLPPKEESAPKEVKVVENSIEHKSNDNSQALTKTVYLKKLDEFLTKSYICHKYILVSNSSMDQKLLEVYNLTPEEENELKSCDPLDLLFNIQNNIPAMYSLYDSMNNDLQHLFFELYQKEMIYYLHKLKEENHIKKLLEEQKQITGTSSTSSPGNTTVNTAQSATHSNSQNQQSNASSTNTQNGVAVSSGPAVVEESHDPLTVLSISNDLKGIVSLLNLGNKTKVPNPLTISTTEMEKFYENILKNNDTYFNDDIKQFVKSNSKVITGLTETQKNALNDEIKKLKDTLQLSFDLYNKYKLKLDRLFNKKKELGQDKMQIKKLTLLKEQLESKLNSLNNPHNVLQNFSVFFNKKKEAEIAETENTLENTKILLKHYKGLVKYYNGESSPLKTLSEVSIQTEDNYANLEKFRALSKIDGKLNDNLHLGKKKLSFLSSGLHHLITELKEVIKNKNYTGNSPSENNKKVNEALKSYENFLPEAKVTTVVTPPQPDVTPSPLSVRVSGSSGSTKEETQIPTSGSLLTELQQVVQLQNYDEEDDSLVVLPIFGESEDNDEYLDQVVTGEAISVTMDNILSGFENEYDVIYLKPLAGVYRSLKKQIEKNIITFNLNLNDILNSRLKKRKYFLDVLESDLMQFKHISSNEYIIEDSFKLLNSEQKNTLLKSYKYIKESVENDIKFAQEGISYYEKVLAKYKDDLESIKKVIKEEKEKFPSSPPTTPPSPAKTDEQKKESKFLPFLTNIETLYNNLVNKIDDYLINLKAKINDCNVEKDEAHVKITKLSDLKAIDDKIDLFKNTNDFEAIKKLINDDTKKDMLGKLLSTGLVQNFPNTIISKLIEGKFQDMLNISQHQCVKKQCPENSGCFRHLDEREECKCLLNYKQEGDKCVENPNPTCNENNGGCDADATCTEEDSGSSRKKITCECTKPDSYPLFDGIFCSSSNFLGISFLLILMLILYSFI</sequence>
<organism>
    <name type="scientific">Plasmodium falciparum (isolate mad20 / Papua New Guinea)</name>
    <dbReference type="NCBI Taxonomy" id="5841"/>
    <lineage>
        <taxon>Eukaryota</taxon>
        <taxon>Sar</taxon>
        <taxon>Alveolata</taxon>
        <taxon>Apicomplexa</taxon>
        <taxon>Aconoidasida</taxon>
        <taxon>Haemosporida</taxon>
        <taxon>Plasmodiidae</taxon>
        <taxon>Plasmodium</taxon>
        <taxon>Plasmodium (Laverania)</taxon>
    </lineage>
</organism>
<feature type="signal peptide" evidence="2">
    <location>
        <begin position="1"/>
        <end position="19"/>
    </location>
</feature>
<feature type="chain" id="PRO_0000024556" description="Merozoite surface protein 1">
    <location>
        <begin position="20"/>
        <end position="1680"/>
    </location>
</feature>
<feature type="chain" id="PRO_0000459272" description="p83 subunit" evidence="1">
    <location>
        <begin position="20"/>
        <end position="703"/>
    </location>
</feature>
<feature type="chain" id="PRO_0000459273" description="p30 subunit" evidence="1">
    <location>
        <begin position="704"/>
        <end position="891"/>
    </location>
</feature>
<feature type="chain" id="PRO_0000459274" description="p38 subunit" evidence="1">
    <location>
        <begin position="892"/>
        <end position="1307"/>
    </location>
</feature>
<feature type="chain" id="PRO_0000459275" description="p42 subunit" evidence="1">
    <location>
        <begin position="1308"/>
        <end position="1680"/>
    </location>
</feature>
<feature type="chain" id="PRO_0000459276" description="p33 subunit" evidence="1">
    <location>
        <begin position="1308"/>
        <end position="1587"/>
    </location>
</feature>
<feature type="chain" id="PRO_0000459277" description="p19 subunit" evidence="1">
    <location>
        <begin position="1588"/>
        <end position="1680"/>
    </location>
</feature>
<feature type="propeptide" id="PRO_0000024557" description="Removed in mature form" evidence="2">
    <location>
        <begin position="1681"/>
        <end position="1701"/>
    </location>
</feature>
<feature type="domain" description="EGF-like 1" evidence="1">
    <location>
        <begin position="1592"/>
        <end position="1632"/>
    </location>
</feature>
<feature type="domain" description="EGF-like 2" evidence="1">
    <location>
        <begin position="1633"/>
        <end position="1680"/>
    </location>
</feature>
<feature type="region of interest" description="Disordered" evidence="3">
    <location>
        <begin position="89"/>
        <end position="118"/>
    </location>
</feature>
<feature type="region of interest" description="Disordered" evidence="3">
    <location>
        <begin position="322"/>
        <end position="344"/>
    </location>
</feature>
<feature type="region of interest" description="Disordered" evidence="3">
    <location>
        <begin position="704"/>
        <end position="739"/>
    </location>
</feature>
<feature type="region of interest" description="Disordered" evidence="3">
    <location>
        <begin position="889"/>
        <end position="936"/>
    </location>
</feature>
<feature type="region of interest" description="Disordered" evidence="3">
    <location>
        <begin position="1230"/>
        <end position="1259"/>
    </location>
</feature>
<feature type="region of interest" description="Disordered" evidence="3">
    <location>
        <begin position="1451"/>
        <end position="1472"/>
    </location>
</feature>
<feature type="compositionally biased region" description="Gly residues" evidence="3">
    <location>
        <begin position="89"/>
        <end position="100"/>
    </location>
</feature>
<feature type="compositionally biased region" description="Low complexity" evidence="3">
    <location>
        <begin position="101"/>
        <end position="116"/>
    </location>
</feature>
<feature type="compositionally biased region" description="Acidic residues" evidence="3">
    <location>
        <begin position="724"/>
        <end position="733"/>
    </location>
</feature>
<feature type="compositionally biased region" description="Low complexity" evidence="3">
    <location>
        <begin position="889"/>
        <end position="927"/>
    </location>
</feature>
<feature type="compositionally biased region" description="Polar residues" evidence="3">
    <location>
        <begin position="1245"/>
        <end position="1259"/>
    </location>
</feature>
<feature type="compositionally biased region" description="Pro residues" evidence="3">
    <location>
        <begin position="1456"/>
        <end position="1465"/>
    </location>
</feature>
<feature type="lipid moiety-binding region" description="GPI-anchor amidated serine" evidence="2">
    <location>
        <position position="1680"/>
    </location>
</feature>
<feature type="glycosylation site" description="N-linked (GlcNAc...) asparagine" evidence="2">
    <location>
        <position position="110"/>
    </location>
</feature>
<feature type="glycosylation site" description="N-linked (GlcNAc...) asparagine" evidence="2">
    <location>
        <position position="239"/>
    </location>
</feature>
<feature type="glycosylation site" description="N-linked (GlcNAc...) asparagine" evidence="2">
    <location>
        <position position="470"/>
    </location>
</feature>
<feature type="glycosylation site" description="N-linked (GlcNAc...) asparagine" evidence="2">
    <location>
        <position position="536"/>
    </location>
</feature>
<feature type="glycosylation site" description="N-linked (GlcNAc...) asparagine" evidence="2">
    <location>
        <position position="607"/>
    </location>
</feature>
<feature type="glycosylation site" description="N-linked (GlcNAc...) asparagine" evidence="2">
    <location>
        <position position="802"/>
    </location>
</feature>
<feature type="glycosylation site" description="N-linked (GlcNAc...) asparagine" evidence="2">
    <location>
        <position position="899"/>
    </location>
</feature>
<feature type="glycosylation site" description="N-linked (GlcNAc...) asparagine" evidence="2">
    <location>
        <position position="919"/>
    </location>
</feature>
<feature type="glycosylation site" description="N-linked (GlcNAc...) asparagine" evidence="2">
    <location>
        <position position="965"/>
    </location>
</feature>
<feature type="glycosylation site" description="N-linked (GlcNAc...) asparagine" evidence="2">
    <location>
        <position position="991"/>
    </location>
</feature>
<feature type="glycosylation site" description="N-linked (GlcNAc...) asparagine" evidence="2">
    <location>
        <position position="1089"/>
    </location>
</feature>
<feature type="glycosylation site" description="N-linked (GlcNAc...) asparagine" evidence="2">
    <location>
        <position position="1196"/>
    </location>
</feature>
<feature type="glycosylation site" description="N-linked (GlcNAc...) asparagine" evidence="2">
    <location>
        <position position="1588"/>
    </location>
</feature>
<feature type="disulfide bond" evidence="1">
    <location>
        <begin position="1594"/>
        <end position="1605"/>
    </location>
</feature>
<feature type="disulfide bond" evidence="1">
    <location>
        <begin position="1599"/>
        <end position="1615"/>
    </location>
</feature>
<feature type="disulfide bond" evidence="1">
    <location>
        <begin position="1617"/>
        <end position="1628"/>
    </location>
</feature>
<feature type="disulfide bond" evidence="1">
    <location>
        <begin position="1636"/>
        <end position="1649"/>
    </location>
</feature>
<feature type="disulfide bond" evidence="1">
    <location>
        <begin position="1643"/>
        <end position="1663"/>
    </location>
</feature>
<feature type="disulfide bond" evidence="1">
    <location>
        <begin position="1665"/>
        <end position="1679"/>
    </location>
</feature>